<feature type="chain" id="PRO_0000275244" description="Potassium/proton antiporter CemA">
    <location>
        <begin position="1"/>
        <end position="231"/>
    </location>
</feature>
<feature type="transmembrane region" description="Helical" evidence="1">
    <location>
        <begin position="7"/>
        <end position="27"/>
    </location>
</feature>
<feature type="transmembrane region" description="Helical" evidence="1">
    <location>
        <begin position="116"/>
        <end position="136"/>
    </location>
</feature>
<feature type="transmembrane region" description="Helical" evidence="1">
    <location>
        <begin position="156"/>
        <end position="176"/>
    </location>
</feature>
<feature type="transmembrane region" description="Helical" evidence="1">
    <location>
        <begin position="191"/>
        <end position="211"/>
    </location>
</feature>
<comment type="function">
    <text evidence="1">Contributes to K(+)/H(+) antiport activity by supporting proton efflux to control proton extrusion and homeostasis in chloroplasts in a light-dependent manner to modulate photosynthesis. Prevents excessive induction of non-photochemical quenching (NPQ) under continuous-light conditions. Indirectly promotes efficient inorganic carbon uptake into chloroplasts.</text>
</comment>
<comment type="catalytic activity">
    <reaction evidence="1">
        <text>K(+)(in) + H(+)(out) = K(+)(out) + H(+)(in)</text>
        <dbReference type="Rhea" id="RHEA:29467"/>
        <dbReference type="ChEBI" id="CHEBI:15378"/>
        <dbReference type="ChEBI" id="CHEBI:29103"/>
    </reaction>
</comment>
<comment type="subcellular location">
    <subcellularLocation>
        <location evidence="1">Plastid</location>
        <location evidence="1">Chloroplast inner membrane</location>
        <topology evidence="1">Multi-pass membrane protein</topology>
    </subcellularLocation>
</comment>
<comment type="similarity">
    <text evidence="1 2">Belongs to the CemA family.</text>
</comment>
<accession>Q09X05</accession>
<organism>
    <name type="scientific">Morus indica</name>
    <name type="common">Mulberry</name>
    <dbReference type="NCBI Taxonomy" id="248361"/>
    <lineage>
        <taxon>Eukaryota</taxon>
        <taxon>Viridiplantae</taxon>
        <taxon>Streptophyta</taxon>
        <taxon>Embryophyta</taxon>
        <taxon>Tracheophyta</taxon>
        <taxon>Spermatophyta</taxon>
        <taxon>Magnoliopsida</taxon>
        <taxon>eudicotyledons</taxon>
        <taxon>Gunneridae</taxon>
        <taxon>Pentapetalae</taxon>
        <taxon>rosids</taxon>
        <taxon>fabids</taxon>
        <taxon>Rosales</taxon>
        <taxon>Moraceae</taxon>
        <taxon>Moreae</taxon>
        <taxon>Morus</taxon>
    </lineage>
</organism>
<reference key="1">
    <citation type="submission" date="2005-09" db="EMBL/GenBank/DDBJ databases">
        <title>The chloroplast genome of mulberry: structural features and comparative analysis.</title>
        <authorList>
            <person name="Ravi V."/>
            <person name="Khurana J.P."/>
            <person name="Tyagi A.K."/>
            <person name="Khurana P."/>
        </authorList>
    </citation>
    <scope>NUCLEOTIDE SEQUENCE [LARGE SCALE GENOMIC DNA]</scope>
    <source>
        <strain>cv. K2</strain>
    </source>
</reference>
<gene>
    <name evidence="1" type="primary">cemA</name>
    <name type="ordered locus">MoinCp033</name>
</gene>
<dbReference type="EMBL" id="DQ226511">
    <property type="protein sequence ID" value="ABB20968.1"/>
    <property type="molecule type" value="Genomic_DNA"/>
</dbReference>
<dbReference type="RefSeq" id="YP_762273.1">
    <property type="nucleotide sequence ID" value="NC_008359.1"/>
</dbReference>
<dbReference type="GeneID" id="4290676"/>
<dbReference type="GO" id="GO:0009706">
    <property type="term" value="C:chloroplast inner membrane"/>
    <property type="evidence" value="ECO:0007669"/>
    <property type="project" value="UniProtKB-SubCell"/>
</dbReference>
<dbReference type="GO" id="GO:0015297">
    <property type="term" value="F:antiporter activity"/>
    <property type="evidence" value="ECO:0007669"/>
    <property type="project" value="UniProtKB-KW"/>
</dbReference>
<dbReference type="GO" id="GO:0015078">
    <property type="term" value="F:proton transmembrane transporter activity"/>
    <property type="evidence" value="ECO:0007669"/>
    <property type="project" value="UniProtKB-UniRule"/>
</dbReference>
<dbReference type="GO" id="GO:0006813">
    <property type="term" value="P:potassium ion transport"/>
    <property type="evidence" value="ECO:0007669"/>
    <property type="project" value="UniProtKB-UniRule"/>
</dbReference>
<dbReference type="HAMAP" id="MF_01308">
    <property type="entry name" value="CemA_PxcA"/>
    <property type="match status" value="1"/>
</dbReference>
<dbReference type="InterPro" id="IPR004282">
    <property type="entry name" value="CemA"/>
</dbReference>
<dbReference type="PANTHER" id="PTHR33650:SF2">
    <property type="entry name" value="CHLOROPLAST ENVELOPE MEMBRANE PROTEIN"/>
    <property type="match status" value="1"/>
</dbReference>
<dbReference type="PANTHER" id="PTHR33650">
    <property type="entry name" value="CHLOROPLAST ENVELOPE MEMBRANE PROTEIN-RELATED"/>
    <property type="match status" value="1"/>
</dbReference>
<dbReference type="Pfam" id="PF03040">
    <property type="entry name" value="CemA"/>
    <property type="match status" value="1"/>
</dbReference>
<evidence type="ECO:0000255" key="1">
    <source>
        <dbReference type="HAMAP-Rule" id="MF_01308"/>
    </source>
</evidence>
<evidence type="ECO:0000305" key="2"/>
<sequence length="231" mass="27201">MAKKKAFISLLYLASIVFLPWWISLSFTFNKSLESWVNNWWNTRPSEILLNDIQEKSILKKFIELEELSLFDEMLKEYSERRLQKLHVGVYNETIQWIKMHNEGRIHTILHFSTNIISFVILSVFSILSNEELIFLNSCLQEFLYNLSDTIKAFSILLLTDLCIGFHSPHGWELMIGSIYKDFGFAHNDQIISGVVSTFPVILDTIFKYWIFRYLNRVSPSLVVIYHSMND</sequence>
<protein>
    <recommendedName>
        <fullName evidence="1">Potassium/proton antiporter CemA</fullName>
    </recommendedName>
    <alternativeName>
        <fullName evidence="1">Chloroplast envelope membrane protein A</fullName>
        <shortName evidence="1">CemA</shortName>
    </alternativeName>
</protein>
<geneLocation type="chloroplast"/>
<keyword id="KW-0050">Antiport</keyword>
<keyword id="KW-0150">Chloroplast</keyword>
<keyword id="KW-0375">Hydrogen ion transport</keyword>
<keyword id="KW-0406">Ion transport</keyword>
<keyword id="KW-0472">Membrane</keyword>
<keyword id="KW-0934">Plastid</keyword>
<keyword id="KW-1001">Plastid inner membrane</keyword>
<keyword id="KW-0630">Potassium</keyword>
<keyword id="KW-0633">Potassium transport</keyword>
<keyword id="KW-0812">Transmembrane</keyword>
<keyword id="KW-1133">Transmembrane helix</keyword>
<keyword id="KW-0813">Transport</keyword>
<name>CEMA_MORIN</name>
<proteinExistence type="inferred from homology"/>